<accession>C4R3D4</accession>
<reference key="1">
    <citation type="journal article" date="2009" name="Nat. Biotechnol.">
        <title>Genome sequence of the recombinant protein production host Pichia pastoris.</title>
        <authorList>
            <person name="De Schutter K."/>
            <person name="Lin Y.-C."/>
            <person name="Tiels P."/>
            <person name="Van Hecke A."/>
            <person name="Glinka S."/>
            <person name="Weber-Lehmann J."/>
            <person name="Rouze P."/>
            <person name="Van de Peer Y."/>
            <person name="Callewaert N."/>
        </authorList>
    </citation>
    <scope>NUCLEOTIDE SEQUENCE [LARGE SCALE GENOMIC DNA]</scope>
    <source>
        <strain>GS115 / ATCC 20864</strain>
    </source>
</reference>
<reference key="2">
    <citation type="journal article" date="1996" name="Mol. Cell. Biol.">
        <title>The Pichia pastoris PER6 gene product is a peroxisomal integral membrane protein essential for peroxisome biogenesis and has sequence similarity to the Zellweger syndrome protein PAF-1.</title>
        <authorList>
            <person name="Waterham H.R."/>
            <person name="de Vries Y."/>
            <person name="Russell K.A."/>
            <person name="Xie W."/>
            <person name="Veenhuis M."/>
            <person name="Cregg J.M."/>
        </authorList>
    </citation>
    <scope>SUBCELLULAR LOCATION</scope>
</reference>
<reference key="3">
    <citation type="journal article" date="2013" name="J. Biol. Chem.">
        <title>Unique requirements for mono- and polyubiquitination of the peroxisomal targeting signal co-receptor, Pex20.</title>
        <authorList>
            <person name="Liu X."/>
            <person name="Subramani S."/>
        </authorList>
    </citation>
    <scope>FUNCTION</scope>
    <scope>CATALYTIC ACTIVITY</scope>
    <scope>MUTAGENESIS OF 281-CYS--CYS-284</scope>
</reference>
<reference key="4">
    <citation type="journal article" date="2002" name="Traffic">
        <title>Peroxisome remnants in pex3delta cells and the requirement of Pex3p for interactions between the peroxisomal docking and translocation subcomplexes.</title>
        <authorList>
            <person name="Hazra P.P."/>
            <person name="Suriapranata I."/>
            <person name="Snyder W.B."/>
            <person name="Subramani S."/>
        </authorList>
    </citation>
    <scope>FUNCTION</scope>
    <scope>SUBUNIT</scope>
</reference>
<name>PEX2_KOMPG</name>
<evidence type="ECO:0000250" key="1">
    <source>
        <dbReference type="UniProtKB" id="G2Q1C9"/>
    </source>
</evidence>
<evidence type="ECO:0000250" key="2">
    <source>
        <dbReference type="UniProtKB" id="P32800"/>
    </source>
</evidence>
<evidence type="ECO:0000255" key="3"/>
<evidence type="ECO:0000255" key="4">
    <source>
        <dbReference type="PROSITE-ProRule" id="PRU00175"/>
    </source>
</evidence>
<evidence type="ECO:0000256" key="5">
    <source>
        <dbReference type="SAM" id="MobiDB-lite"/>
    </source>
</evidence>
<evidence type="ECO:0000269" key="6">
    <source>
    </source>
</evidence>
<evidence type="ECO:0000269" key="7">
    <source>
    </source>
</evidence>
<evidence type="ECO:0000269" key="8">
    <source>
    </source>
</evidence>
<evidence type="ECO:0000303" key="9">
    <source>
    </source>
</evidence>
<evidence type="ECO:0000303" key="10">
    <source>
    </source>
</evidence>
<evidence type="ECO:0000305" key="11"/>
<evidence type="ECO:0000312" key="12">
    <source>
        <dbReference type="EMBL" id="CAY69969.1"/>
    </source>
</evidence>
<evidence type="ECO:0000312" key="13">
    <source>
        <dbReference type="Proteomes" id="UP000000314"/>
    </source>
</evidence>
<keyword id="KW-0472">Membrane</keyword>
<keyword id="KW-0479">Metal-binding</keyword>
<keyword id="KW-0576">Peroxisome</keyword>
<keyword id="KW-0653">Protein transport</keyword>
<keyword id="KW-1185">Reference proteome</keyword>
<keyword id="KW-0808">Transferase</keyword>
<keyword id="KW-0812">Transmembrane</keyword>
<keyword id="KW-1133">Transmembrane helix</keyword>
<keyword id="KW-0813">Transport</keyword>
<keyword id="KW-0833">Ubl conjugation pathway</keyword>
<keyword id="KW-0862">Zinc</keyword>
<keyword id="KW-0863">Zinc-finger</keyword>
<dbReference type="EC" id="2.3.2.36" evidence="7"/>
<dbReference type="EMBL" id="FN392321">
    <property type="protein sequence ID" value="CAY69969.1"/>
    <property type="molecule type" value="Genomic_DNA"/>
</dbReference>
<dbReference type="RefSeq" id="XP_002492249.1">
    <property type="nucleotide sequence ID" value="XM_002492204.1"/>
</dbReference>
<dbReference type="SMR" id="C4R3D4"/>
<dbReference type="FunCoup" id="C4R3D4">
    <property type="interactions" value="112"/>
</dbReference>
<dbReference type="STRING" id="644223.C4R3D4"/>
<dbReference type="EnsemblFungi" id="CAY69969">
    <property type="protein sequence ID" value="CAY69969"/>
    <property type="gene ID" value="PAS_chr3_0043"/>
</dbReference>
<dbReference type="GeneID" id="8199329"/>
<dbReference type="KEGG" id="ppa:PAS_chr3_0043"/>
<dbReference type="eggNOG" id="KOG2879">
    <property type="taxonomic scope" value="Eukaryota"/>
</dbReference>
<dbReference type="HOGENOM" id="CLU_024591_0_0_1"/>
<dbReference type="InParanoid" id="C4R3D4"/>
<dbReference type="OMA" id="CQPWNGD"/>
<dbReference type="OrthoDB" id="1701437at2759"/>
<dbReference type="UniPathway" id="UPA00143"/>
<dbReference type="Proteomes" id="UP000000314">
    <property type="component" value="Chromosome 3"/>
</dbReference>
<dbReference type="GO" id="GO:0005778">
    <property type="term" value="C:peroxisomal membrane"/>
    <property type="evidence" value="ECO:0007669"/>
    <property type="project" value="UniProtKB-SubCell"/>
</dbReference>
<dbReference type="GO" id="GO:0016740">
    <property type="term" value="F:transferase activity"/>
    <property type="evidence" value="ECO:0007669"/>
    <property type="project" value="UniProtKB-KW"/>
</dbReference>
<dbReference type="GO" id="GO:0008270">
    <property type="term" value="F:zinc ion binding"/>
    <property type="evidence" value="ECO:0007669"/>
    <property type="project" value="UniProtKB-KW"/>
</dbReference>
<dbReference type="GO" id="GO:0016562">
    <property type="term" value="P:protein import into peroxisome matrix, receptor recycling"/>
    <property type="evidence" value="ECO:0007669"/>
    <property type="project" value="UniProtKB-ARBA"/>
</dbReference>
<dbReference type="GO" id="GO:0016567">
    <property type="term" value="P:protein ubiquitination"/>
    <property type="evidence" value="ECO:0007669"/>
    <property type="project" value="UniProtKB-ARBA"/>
</dbReference>
<dbReference type="Gene3D" id="3.30.40.10">
    <property type="entry name" value="Zinc/RING finger domain, C3HC4 (zinc finger)"/>
    <property type="match status" value="1"/>
</dbReference>
<dbReference type="InterPro" id="IPR025654">
    <property type="entry name" value="PEX2/10"/>
</dbReference>
<dbReference type="InterPro" id="IPR006845">
    <property type="entry name" value="Pex_N"/>
</dbReference>
<dbReference type="InterPro" id="IPR001841">
    <property type="entry name" value="Znf_RING"/>
</dbReference>
<dbReference type="InterPro" id="IPR013083">
    <property type="entry name" value="Znf_RING/FYVE/PHD"/>
</dbReference>
<dbReference type="InterPro" id="IPR017907">
    <property type="entry name" value="Znf_RING_CS"/>
</dbReference>
<dbReference type="PANTHER" id="PTHR23350">
    <property type="entry name" value="PEROXISOME ASSEMBLY PROTEIN 10"/>
    <property type="match status" value="1"/>
</dbReference>
<dbReference type="PANTHER" id="PTHR23350:SF4">
    <property type="entry name" value="PEROXISOME BIOGENESIS FACTOR 2"/>
    <property type="match status" value="1"/>
</dbReference>
<dbReference type="Pfam" id="PF04757">
    <property type="entry name" value="Pex2_Pex12"/>
    <property type="match status" value="1"/>
</dbReference>
<dbReference type="SMART" id="SM00184">
    <property type="entry name" value="RING"/>
    <property type="match status" value="1"/>
</dbReference>
<dbReference type="SUPFAM" id="SSF57850">
    <property type="entry name" value="RING/U-box"/>
    <property type="match status" value="1"/>
</dbReference>
<dbReference type="PROSITE" id="PS00518">
    <property type="entry name" value="ZF_RING_1"/>
    <property type="match status" value="1"/>
</dbReference>
<organism evidence="12 13">
    <name type="scientific">Komagataella phaffii (strain GS115 / ATCC 20864)</name>
    <name type="common">Yeast</name>
    <name type="synonym">Pichia pastoris</name>
    <dbReference type="NCBI Taxonomy" id="644223"/>
    <lineage>
        <taxon>Eukaryota</taxon>
        <taxon>Fungi</taxon>
        <taxon>Dikarya</taxon>
        <taxon>Ascomycota</taxon>
        <taxon>Saccharomycotina</taxon>
        <taxon>Pichiomycetes</taxon>
        <taxon>Pichiales</taxon>
        <taxon>Pichiaceae</taxon>
        <taxon>Komagataella</taxon>
    </lineage>
</organism>
<proteinExistence type="evidence at protein level"/>
<protein>
    <recommendedName>
        <fullName evidence="9">Peroxisomal biogenesis factor 2</fullName>
        <ecNumber evidence="7">2.3.2.36</ecNumber>
    </recommendedName>
    <alternativeName>
        <fullName evidence="9">E3 ubiquitin-protein ligase PEX2</fullName>
    </alternativeName>
    <alternativeName>
        <fullName evidence="9">Peroxin-2</fullName>
    </alternativeName>
    <alternativeName>
        <fullName evidence="10">Peroxisomal protein PER6</fullName>
    </alternativeName>
</protein>
<comment type="function">
    <text evidence="2 6 7">E3 ubiquitin-protein ligase component of the peroxisomal translocation complex (PubMed:12121419, PubMed:23344950). The two types of peroxisomal matrix targeting signals, PTS1 and PTS2, are first recognized in the cytosol by their receptors PEX5 and PEX7, respectively, which then carry the cargo to the peroxisomal membrane. The peroxisomal targeting signal (PTS) receptor-cargo complexes interact with peroxisomal membrane protein (PMP) components of the docking complex. They have then additional downstream interactions with the translocation complex, leading to the transport of fully folded and oligomerized cargo into the peroxisome matrix (PubMed:12121419). The peroxisomal translocation complex forms the retrotranslocation channel with each subunit contributing transmembrane segments that coassemble into an open channel that specifically allows the passage of PEX5 and PEX20 through the peroxisomal membrane (By similarity). Specifically catalyzes monoubiquitination of PEX5 and/or PEX20 at 'Cys-6' and 'Cys-8', respectively, a modification that acts as a signal for PEX5 or PEX20 export from peroxisomes to the cytosol, thereby promoting PEX5 and PEX20 recycling (PubMed:12121419, PubMed:23344950).</text>
</comment>
<comment type="catalytic activity">
    <reaction evidence="7">
        <text>[E2 ubiquitin-conjugating enzyme]-S-ubiquitinyl-L-cysteine + [acceptor protein]-L-cysteine = [E2 ubiquitin-conjugating enzyme]-L-cysteine + [acceptor protein]-S-ubiquitinyl-L-cysteine.</text>
        <dbReference type="EC" id="2.3.2.36"/>
    </reaction>
</comment>
<comment type="pathway">
    <text evidence="7">Protein modification; protein ubiquitination.</text>
</comment>
<comment type="subunit">
    <text evidence="6">Component of the peroxisomal translocation complex, composed of at least PEX3, PEX2, PEX10 and PEX12.</text>
</comment>
<comment type="subcellular location">
    <subcellularLocation>
        <location evidence="8">Peroxisome membrane</location>
        <topology evidence="3">Multi-pass membrane protein</topology>
    </subcellularLocation>
</comment>
<comment type="domain">
    <text evidence="1">The three subunits of the retrotranslocation channel (PEX2, PEX10 and PEX12) coassemble in the membrane into a channel with an open 10 Angstrom pore. The RING-type zinc-fingers that catalyze PEX5 or PEX20 receptor ubiquitination are positioned above the pore on the cytosolic side of the complex.</text>
</comment>
<comment type="similarity">
    <text evidence="11">Belongs to the pex2/pex10/pex12 family.</text>
</comment>
<sequence>MPNRLIPLANPANRVLQLDAKLLDNEISDMLYRQLSGAFNSNRLPSWLGRIHSNYASELKLLLELLIFKVTVWNKHSSYGLTLQNLVMYDGGVHNKKFRSKQQSELRVTKKILLLSSVLLGYFVKKIQSYVYSFEDYDLETDGEDLSTLERIRLKTIKLLKSQISTLEKAHSVLSLVNFVTFLVSGSFPDLTTRILNIRFKPLVTTQVAFASNPETISYEFQNRQLVWNTLTEFIVFILPALSVPKFTKSLVSSITGTSPKSSQVTDEDLKVFSSLPERVCAICFQNSQNSDSGAQNDISLNDTLVTNPYETTCGHIYCYVCILSKLQIFKEEGKNLPKSDPNKYWHCLRCNEPASWCRVYTGDVEDALRQKAVEEVTEDEDASSEDEEKRDQDSEGAKTVSQSFHHVNGSDYQTASFIEQAELNENEYTDGSEVEIYDAEDEYTDEEVDDDSPGFFVGAL</sequence>
<gene>
    <name type="primary">PEX2</name>
    <name evidence="10" type="synonym">PER6</name>
    <name type="ordered locus">PAS_chr3_0043</name>
</gene>
<feature type="chain" id="PRO_0000461161" description="Peroxisomal biogenesis factor 2">
    <location>
        <begin position="1"/>
        <end position="461"/>
    </location>
</feature>
<feature type="topological domain" description="Peroxisomal matrix" evidence="1">
    <location>
        <begin position="1"/>
        <end position="13"/>
    </location>
</feature>
<feature type="transmembrane region" description="Helical; Name=TM1" evidence="1">
    <location>
        <begin position="14"/>
        <end position="40"/>
    </location>
</feature>
<feature type="topological domain" description="Cytoplasmic" evidence="1">
    <location>
        <begin position="41"/>
        <end position="51"/>
    </location>
</feature>
<feature type="transmembrane region" description="Helical; Name=TM2" evidence="1">
    <location>
        <begin position="52"/>
        <end position="77"/>
    </location>
</feature>
<feature type="topological domain" description="Peroxisomal matrix" evidence="1">
    <location>
        <begin position="78"/>
        <end position="101"/>
    </location>
</feature>
<feature type="transmembrane region" description="Helical; Name=TM3" evidence="1">
    <location>
        <begin position="102"/>
        <end position="139"/>
    </location>
</feature>
<feature type="topological domain" description="Cytoplasmic" evidence="1">
    <location>
        <begin position="140"/>
        <end position="151"/>
    </location>
</feature>
<feature type="transmembrane region" description="Helical; Name=TM4" evidence="1">
    <location>
        <begin position="152"/>
        <end position="185"/>
    </location>
</feature>
<feature type="topological domain" description="Peroxisomal matrix" evidence="1">
    <location>
        <begin position="186"/>
        <end position="218"/>
    </location>
</feature>
<feature type="transmembrane region" description="Helical; Name=TM5" evidence="1">
    <location>
        <begin position="219"/>
        <end position="242"/>
    </location>
</feature>
<feature type="topological domain" description="Cytoplasmic" evidence="1">
    <location>
        <begin position="243"/>
        <end position="461"/>
    </location>
</feature>
<feature type="zinc finger region" description="RING-type" evidence="4">
    <location>
        <begin position="281"/>
        <end position="352"/>
    </location>
</feature>
<feature type="region of interest" description="Disordered" evidence="5">
    <location>
        <begin position="374"/>
        <end position="408"/>
    </location>
</feature>
<feature type="region of interest" description="Disordered" evidence="5">
    <location>
        <begin position="440"/>
        <end position="461"/>
    </location>
</feature>
<feature type="compositionally biased region" description="Acidic residues" evidence="5">
    <location>
        <begin position="376"/>
        <end position="387"/>
    </location>
</feature>
<feature type="compositionally biased region" description="Basic and acidic residues" evidence="5">
    <location>
        <begin position="388"/>
        <end position="397"/>
    </location>
</feature>
<feature type="compositionally biased region" description="Acidic residues" evidence="5">
    <location>
        <begin position="440"/>
        <end position="453"/>
    </location>
</feature>
<feature type="binding site" evidence="1">
    <location>
        <position position="281"/>
    </location>
    <ligand>
        <name>Zn(2+)</name>
        <dbReference type="ChEBI" id="CHEBI:29105"/>
        <label>1</label>
    </ligand>
</feature>
<feature type="binding site" evidence="1">
    <location>
        <position position="284"/>
    </location>
    <ligand>
        <name>Zn(2+)</name>
        <dbReference type="ChEBI" id="CHEBI:29105"/>
        <label>1</label>
    </ligand>
</feature>
<feature type="binding site" evidence="1">
    <location>
        <position position="314"/>
    </location>
    <ligand>
        <name>Zn(2+)</name>
        <dbReference type="ChEBI" id="CHEBI:29105"/>
        <label>2</label>
    </ligand>
</feature>
<feature type="binding site" evidence="1">
    <location>
        <position position="316"/>
    </location>
    <ligand>
        <name>Zn(2+)</name>
        <dbReference type="ChEBI" id="CHEBI:29105"/>
        <label>2</label>
    </ligand>
</feature>
<feature type="binding site" evidence="1">
    <location>
        <position position="319"/>
    </location>
    <ligand>
        <name>Zn(2+)</name>
        <dbReference type="ChEBI" id="CHEBI:29105"/>
        <label>1</label>
    </ligand>
</feature>
<feature type="binding site" evidence="1">
    <location>
        <position position="322"/>
    </location>
    <ligand>
        <name>Zn(2+)</name>
        <dbReference type="ChEBI" id="CHEBI:29105"/>
        <label>1</label>
    </ligand>
</feature>
<feature type="binding site" evidence="1">
    <location>
        <position position="348"/>
    </location>
    <ligand>
        <name>Zn(2+)</name>
        <dbReference type="ChEBI" id="CHEBI:29105"/>
        <label>2</label>
    </ligand>
</feature>
<feature type="binding site" evidence="1">
    <location>
        <position position="351"/>
    </location>
    <ligand>
        <name>Zn(2+)</name>
        <dbReference type="ChEBI" id="CHEBI:29105"/>
        <label>2</label>
    </ligand>
</feature>